<comment type="function">
    <text evidence="1">Neuropeptides that play a significant role in the regulation of food intake and sleep-wakefulness, possibly by coordinating the complex behavioral and physiologic responses of these complementary homeostatic functions. A broader role in the homeostatic regulation of energy metabolism, autonomic function, hormonal balance and the regulation of body fluids, is also suggested.</text>
</comment>
<comment type="function">
    <molecule>Orexin-A</molecule>
    <text evidence="1">Binds to orexin receptors HCRTR1/OX1R and HCRTR2/OX2R with a high affinity (By similarity). Stimulates food intake (By similarity). Modulates pituitary luteinizing hormone secretion in an ovarian steroid-dependent manner (By similarity).</text>
</comment>
<comment type="function">
    <molecule>Orexin-B</molecule>
    <text evidence="1">Binds to orexin receptor HCRTR2/OX2R only (By similarity). Stimulates food intake (By similarity). Modulates pituitary luteinizing hormone secretion in an ovarian steroid-dependent manner (By similarity).</text>
</comment>
<comment type="subcellular location">
    <subcellularLocation>
        <location evidence="1">Rough endoplasmic reticulum</location>
    </subcellularLocation>
    <subcellularLocation>
        <location evidence="1">Cytoplasmic vesicle</location>
    </subcellularLocation>
    <subcellularLocation>
        <location evidence="1">Synapse</location>
    </subcellularLocation>
    <text evidence="1">Associated with perikaryal rough endoplasmic reticulum as well as cytoplasmic large granular vesicles at synapses.</text>
</comment>
<comment type="PTM">
    <text evidence="1">Specific enzymatic cleavages at paired basic residues yield the different active peptides.</text>
</comment>
<comment type="similarity">
    <text evidence="3">Belongs to the orexin family.</text>
</comment>
<comment type="online information" name="Protein Spotlight">
    <link uri="https://www.proteinspotlight.org/back_issues/015"/>
    <text>Qui dort dine - Issue 15 of October 2001</text>
</comment>
<name>OREX_PIG</name>
<feature type="signal peptide" evidence="1">
    <location>
        <begin position="1"/>
        <end position="33"/>
    </location>
</feature>
<feature type="peptide" id="PRO_0000020267" description="Orexin-A" evidence="1">
    <location>
        <begin position="34"/>
        <end position="66"/>
    </location>
</feature>
<feature type="peptide" id="PRO_0000020268" description="Orexin-B" evidence="1">
    <location>
        <begin position="70"/>
        <end position="97"/>
    </location>
</feature>
<feature type="propeptide" id="PRO_0000020269" description="Removed in mature form" evidence="1">
    <location>
        <begin position="98"/>
        <end position="131"/>
    </location>
</feature>
<feature type="modified residue" description="Pyrrolidone carboxylic acid" evidence="1">
    <location>
        <position position="34"/>
    </location>
</feature>
<feature type="modified residue" description="Leucine amide" evidence="1">
    <location>
        <position position="66"/>
    </location>
</feature>
<feature type="modified residue" description="Methionine amide" evidence="1">
    <location>
        <position position="97"/>
    </location>
</feature>
<feature type="disulfide bond" evidence="1">
    <location>
        <begin position="39"/>
        <end position="45"/>
    </location>
</feature>
<feature type="disulfide bond" evidence="1">
    <location>
        <begin position="40"/>
        <end position="47"/>
    </location>
</feature>
<organism>
    <name type="scientific">Sus scrofa</name>
    <name type="common">Pig</name>
    <dbReference type="NCBI Taxonomy" id="9823"/>
    <lineage>
        <taxon>Eukaryota</taxon>
        <taxon>Metazoa</taxon>
        <taxon>Chordata</taxon>
        <taxon>Craniata</taxon>
        <taxon>Vertebrata</taxon>
        <taxon>Euteleostomi</taxon>
        <taxon>Mammalia</taxon>
        <taxon>Eutheria</taxon>
        <taxon>Laurasiatheria</taxon>
        <taxon>Artiodactyla</taxon>
        <taxon>Suina</taxon>
        <taxon>Suidae</taxon>
        <taxon>Sus</taxon>
    </lineage>
</organism>
<gene>
    <name type="primary">HCRT</name>
    <name type="synonym">ORX</name>
    <name type="synonym">OX</name>
    <name type="synonym">PPOX</name>
</gene>
<proteinExistence type="evidence at transcript level"/>
<evidence type="ECO:0000250" key="1">
    <source>
        <dbReference type="UniProtKB" id="O55232"/>
    </source>
</evidence>
<evidence type="ECO:0000303" key="2">
    <source>
    </source>
</evidence>
<evidence type="ECO:0000305" key="3"/>
<sequence>MNPPFAKVSWATVTLLLLLLLLPPAVLSPGAAAQPLPDCCRQKTCSCRLYELLHGAGNHAAGILTLGKRRPGPPGLQGRLQRLLQASGNHAAGILTMGRRAGAEPAPRLCPGRRCLAAAASSVAPGGRSGI</sequence>
<accession>O77668</accession>
<accession>Q000Y9</accession>
<accession>Q9TTA6</accession>
<reference key="1">
    <citation type="journal article" date="1999" name="Domest. Anim. Endocrinol.">
        <title>Cloning of porcine prepro-orexin cDNA and effects of an intramuscular injection of synthetic porcine orexin-B on feed intake in young pigs.</title>
        <authorList>
            <person name="Dyer C.J."/>
            <person name="Touchette K.J."/>
            <person name="Carroll J.A."/>
            <person name="Allee G.L."/>
            <person name="Matteri R.L."/>
        </authorList>
    </citation>
    <scope>NUCLEOTIDE SEQUENCE [MRNA]</scope>
    <scope>SYNTHESIS OF OREXIN-B</scope>
    <source>
        <tissue>Hypothalamus</tissue>
    </source>
</reference>
<reference key="2">
    <citation type="submission" date="2007-02" db="EMBL/GenBank/DDBJ databases">
        <authorList>
            <person name="Guo H.H."/>
            <person name="Wang L.X."/>
        </authorList>
    </citation>
    <scope>NUCLEOTIDE SEQUENCE [GENOMIC DNA / MRNA]</scope>
</reference>
<reference key="3">
    <citation type="journal article" date="2000" name="Mamm. Genome">
        <title>Linkage and physical mapping of the porcine prepro-orexin gene.</title>
        <authorList>
            <person name="Malek M."/>
            <person name="Marklund S."/>
            <person name="Dyer C."/>
            <person name="Matteri R.L."/>
            <person name="Rothschild M.F."/>
        </authorList>
    </citation>
    <scope>NUCLEOTIDE SEQUENCE [GENOMIC DNA] OF 3-131</scope>
</reference>
<keyword id="KW-0027">Amidation</keyword>
<keyword id="KW-0165">Cleavage on pair of basic residues</keyword>
<keyword id="KW-0968">Cytoplasmic vesicle</keyword>
<keyword id="KW-1015">Disulfide bond</keyword>
<keyword id="KW-0256">Endoplasmic reticulum</keyword>
<keyword id="KW-0527">Neuropeptide</keyword>
<keyword id="KW-0873">Pyrrolidone carboxylic acid</keyword>
<keyword id="KW-1185">Reference proteome</keyword>
<keyword id="KW-0732">Signal</keyword>
<keyword id="KW-0770">Synapse</keyword>
<protein>
    <recommendedName>
        <fullName evidence="1">Hypocretin neuropeptide precursor</fullName>
    </recommendedName>
    <alternativeName>
        <fullName evidence="1">Hypocretin</fullName>
        <shortName evidence="1">Hcrt</shortName>
    </alternativeName>
    <alternativeName>
        <fullName evidence="1">Orexin precursor</fullName>
    </alternativeName>
    <alternativeName>
        <fullName evidence="2">Prepro-orexin</fullName>
    </alternativeName>
    <alternativeName>
        <fullName evidence="1">Preprohypocretin</fullName>
    </alternativeName>
    <component>
        <recommendedName>
            <fullName evidence="2">Orexin-A</fullName>
        </recommendedName>
        <alternativeName>
            <fullName evidence="1">Hypocretin-1</fullName>
            <shortName evidence="3">Hcrt1</shortName>
        </alternativeName>
    </component>
    <component>
        <recommendedName>
            <fullName evidence="2">Orexin-B</fullName>
        </recommendedName>
        <alternativeName>
            <fullName evidence="1">Hypocretin-2</fullName>
            <shortName evidence="3">Hcrt2</shortName>
        </alternativeName>
    </component>
</protein>
<dbReference type="EMBL" id="AF075241">
    <property type="protein sequence ID" value="AAC26827.1"/>
    <property type="molecule type" value="mRNA"/>
</dbReference>
<dbReference type="EMBL" id="DQ985365">
    <property type="protein sequence ID" value="ABJ15704.1"/>
    <property type="molecule type" value="Genomic_DNA"/>
</dbReference>
<dbReference type="EMBL" id="EF434654">
    <property type="protein sequence ID" value="ABO15568.1"/>
    <property type="molecule type" value="Genomic_DNA"/>
</dbReference>
<dbReference type="EMBL" id="EF434655">
    <property type="protein sequence ID" value="ABO15569.1"/>
    <property type="molecule type" value="mRNA"/>
</dbReference>
<dbReference type="EMBL" id="AF169352">
    <property type="protein sequence ID" value="AAF24216.1"/>
    <property type="molecule type" value="Genomic_DNA"/>
</dbReference>
<dbReference type="RefSeq" id="NP_999321.1">
    <property type="nucleotide sequence ID" value="NM_214156.2"/>
</dbReference>
<dbReference type="RefSeq" id="XP_013836403.1">
    <property type="nucleotide sequence ID" value="XM_013980949.1"/>
</dbReference>
<dbReference type="RefSeq" id="XP_013836404.1">
    <property type="nucleotide sequence ID" value="XM_013980950.1"/>
</dbReference>
<dbReference type="RefSeq" id="XP_013836405.1">
    <property type="nucleotide sequence ID" value="XM_013980951.1"/>
</dbReference>
<dbReference type="FunCoup" id="O77668">
    <property type="interactions" value="212"/>
</dbReference>
<dbReference type="STRING" id="9823.ENSSSCP00000018447"/>
<dbReference type="PaxDb" id="9823-ENSSSCP00000018447"/>
<dbReference type="PeptideAtlas" id="O77668"/>
<dbReference type="Ensembl" id="ENSSSCT00000018952.5">
    <property type="protein sequence ID" value="ENSSSCP00000018447.2"/>
    <property type="gene ID" value="ENSSSCG00000017410.5"/>
</dbReference>
<dbReference type="Ensembl" id="ENSSSCT00015041351.1">
    <property type="protein sequence ID" value="ENSSSCP00015016338.1"/>
    <property type="gene ID" value="ENSSSCG00015031170.1"/>
</dbReference>
<dbReference type="Ensembl" id="ENSSSCT00025029933.1">
    <property type="protein sequence ID" value="ENSSSCP00025012727.1"/>
    <property type="gene ID" value="ENSSSCG00025021994.1"/>
</dbReference>
<dbReference type="Ensembl" id="ENSSSCT00030094217.1">
    <property type="protein sequence ID" value="ENSSSCP00030043432.1"/>
    <property type="gene ID" value="ENSSSCG00030067357.1"/>
</dbReference>
<dbReference type="Ensembl" id="ENSSSCT00035024083.1">
    <property type="protein sequence ID" value="ENSSSCP00035009010.1"/>
    <property type="gene ID" value="ENSSSCG00035018642.1"/>
</dbReference>
<dbReference type="Ensembl" id="ENSSSCT00040026553.1">
    <property type="protein sequence ID" value="ENSSSCP00040011228.1"/>
    <property type="gene ID" value="ENSSSCG00040019667.1"/>
</dbReference>
<dbReference type="Ensembl" id="ENSSSCT00045066309.1">
    <property type="protein sequence ID" value="ENSSSCP00045047015.1"/>
    <property type="gene ID" value="ENSSSCG00045038270.1"/>
</dbReference>
<dbReference type="Ensembl" id="ENSSSCT00050093034.1">
    <property type="protein sequence ID" value="ENSSSCP00050040132.1"/>
    <property type="gene ID" value="ENSSSCG00050068177.1"/>
</dbReference>
<dbReference type="Ensembl" id="ENSSSCT00055057785.1">
    <property type="protein sequence ID" value="ENSSSCP00055046237.1"/>
    <property type="gene ID" value="ENSSSCG00055029101.1"/>
</dbReference>
<dbReference type="Ensembl" id="ENSSSCT00060078546.1">
    <property type="protein sequence ID" value="ENSSSCP00060033937.1"/>
    <property type="gene ID" value="ENSSSCG00060057653.1"/>
</dbReference>
<dbReference type="Ensembl" id="ENSSSCT00065008106.1">
    <property type="protein sequence ID" value="ENSSSCP00065003401.1"/>
    <property type="gene ID" value="ENSSSCG00065006053.1"/>
</dbReference>
<dbReference type="Ensembl" id="ENSSSCT00070028107.1">
    <property type="protein sequence ID" value="ENSSSCP00070023404.1"/>
    <property type="gene ID" value="ENSSSCG00070014330.1"/>
</dbReference>
<dbReference type="Ensembl" id="ENSSSCT00085018427">
    <property type="protein sequence ID" value="ENSSSCP00085012697"/>
    <property type="gene ID" value="ENSSSCG00085009870"/>
</dbReference>
<dbReference type="Ensembl" id="ENSSSCT00090006601">
    <property type="protein sequence ID" value="ENSSSCP00090004048"/>
    <property type="gene ID" value="ENSSSCG00090003825"/>
</dbReference>
<dbReference type="Ensembl" id="ENSSSCT00105062739">
    <property type="protein sequence ID" value="ENSSSCP00105044572"/>
    <property type="gene ID" value="ENSSSCG00105032987"/>
</dbReference>
<dbReference type="Ensembl" id="ENSSSCT00110074133">
    <property type="protein sequence ID" value="ENSSSCP00110052336"/>
    <property type="gene ID" value="ENSSSCG00110038824"/>
</dbReference>
<dbReference type="Ensembl" id="ENSSSCT00115038554">
    <property type="protein sequence ID" value="ENSSSCP00115036367"/>
    <property type="gene ID" value="ENSSSCG00115021785"/>
</dbReference>
<dbReference type="Ensembl" id="ENSSSCT00130029053">
    <property type="protein sequence ID" value="ENSSSCP00130019865"/>
    <property type="gene ID" value="ENSSSCG00130012648"/>
</dbReference>
<dbReference type="GeneID" id="397305"/>
<dbReference type="KEGG" id="ssc:397305"/>
<dbReference type="CTD" id="3060"/>
<dbReference type="VGNC" id="VGNC:88806">
    <property type="gene designation" value="HCRT"/>
</dbReference>
<dbReference type="eggNOG" id="ENOG502S83I">
    <property type="taxonomic scope" value="Eukaryota"/>
</dbReference>
<dbReference type="GeneTree" id="ENSGT00390000014272"/>
<dbReference type="HOGENOM" id="CLU_149027_1_0_1"/>
<dbReference type="InParanoid" id="O77668"/>
<dbReference type="OMA" id="HPCPGRR"/>
<dbReference type="OrthoDB" id="9379045at2759"/>
<dbReference type="TreeFam" id="TF330756"/>
<dbReference type="Reactome" id="R-SSC-389397">
    <property type="pathway name" value="Orexin and neuropeptides FF and QRFP bind to their respective receptors"/>
</dbReference>
<dbReference type="Reactome" id="R-SSC-416476">
    <property type="pathway name" value="G alpha (q) signalling events"/>
</dbReference>
<dbReference type="Proteomes" id="UP000008227">
    <property type="component" value="Chromosome 12"/>
</dbReference>
<dbReference type="Proteomes" id="UP000314985">
    <property type="component" value="Chromosome 12"/>
</dbReference>
<dbReference type="Proteomes" id="UP000694570">
    <property type="component" value="Unplaced"/>
</dbReference>
<dbReference type="Proteomes" id="UP000694571">
    <property type="component" value="Unplaced"/>
</dbReference>
<dbReference type="Proteomes" id="UP000694720">
    <property type="component" value="Unplaced"/>
</dbReference>
<dbReference type="Proteomes" id="UP000694722">
    <property type="component" value="Unplaced"/>
</dbReference>
<dbReference type="Proteomes" id="UP000694723">
    <property type="component" value="Unplaced"/>
</dbReference>
<dbReference type="Proteomes" id="UP000694724">
    <property type="component" value="Unplaced"/>
</dbReference>
<dbReference type="Proteomes" id="UP000694725">
    <property type="component" value="Unplaced"/>
</dbReference>
<dbReference type="Proteomes" id="UP000694726">
    <property type="component" value="Unplaced"/>
</dbReference>
<dbReference type="Proteomes" id="UP000694727">
    <property type="component" value="Unplaced"/>
</dbReference>
<dbReference type="Proteomes" id="UP000694728">
    <property type="component" value="Unplaced"/>
</dbReference>
<dbReference type="Bgee" id="ENSSSCG00000017410">
    <property type="expression patterns" value="Expressed in oocyte and 25 other cell types or tissues"/>
</dbReference>
<dbReference type="GO" id="GO:0031410">
    <property type="term" value="C:cytoplasmic vesicle"/>
    <property type="evidence" value="ECO:0007669"/>
    <property type="project" value="UniProtKB-KW"/>
</dbReference>
<dbReference type="GO" id="GO:0048471">
    <property type="term" value="C:perinuclear region of cytoplasm"/>
    <property type="evidence" value="ECO:0000318"/>
    <property type="project" value="GO_Central"/>
</dbReference>
<dbReference type="GO" id="GO:0005791">
    <property type="term" value="C:rough endoplasmic reticulum"/>
    <property type="evidence" value="ECO:0007669"/>
    <property type="project" value="UniProtKB-SubCell"/>
</dbReference>
<dbReference type="GO" id="GO:0045202">
    <property type="term" value="C:synapse"/>
    <property type="evidence" value="ECO:0007669"/>
    <property type="project" value="UniProtKB-SubCell"/>
</dbReference>
<dbReference type="GO" id="GO:0005184">
    <property type="term" value="F:neuropeptide hormone activity"/>
    <property type="evidence" value="ECO:0000318"/>
    <property type="project" value="GO_Central"/>
</dbReference>
<dbReference type="GO" id="GO:0031771">
    <property type="term" value="F:type 1 orexin receptor binding"/>
    <property type="evidence" value="ECO:0000318"/>
    <property type="project" value="GO_Central"/>
</dbReference>
<dbReference type="GO" id="GO:0031772">
    <property type="term" value="F:type 2 orexin receptor binding"/>
    <property type="evidence" value="ECO:0000318"/>
    <property type="project" value="GO_Central"/>
</dbReference>
<dbReference type="GO" id="GO:0042755">
    <property type="term" value="P:eating behavior"/>
    <property type="evidence" value="ECO:0000318"/>
    <property type="project" value="GO_Central"/>
</dbReference>
<dbReference type="GO" id="GO:0007218">
    <property type="term" value="P:neuropeptide signaling pathway"/>
    <property type="evidence" value="ECO:0007669"/>
    <property type="project" value="UniProtKB-KW"/>
</dbReference>
<dbReference type="GO" id="GO:0120162">
    <property type="term" value="P:positive regulation of cold-induced thermogenesis"/>
    <property type="evidence" value="ECO:0007669"/>
    <property type="project" value="Ensembl"/>
</dbReference>
<dbReference type="GO" id="GO:0051971">
    <property type="term" value="P:positive regulation of transmission of nerve impulse"/>
    <property type="evidence" value="ECO:0000318"/>
    <property type="project" value="GO_Central"/>
</dbReference>
<dbReference type="GO" id="GO:0046928">
    <property type="term" value="P:regulation of neurotransmitter secretion"/>
    <property type="evidence" value="ECO:0000318"/>
    <property type="project" value="GO_Central"/>
</dbReference>
<dbReference type="GO" id="GO:0042594">
    <property type="term" value="P:response to starvation"/>
    <property type="evidence" value="ECO:0000318"/>
    <property type="project" value="GO_Central"/>
</dbReference>
<dbReference type="GO" id="GO:0030431">
    <property type="term" value="P:sleep"/>
    <property type="evidence" value="ECO:0000318"/>
    <property type="project" value="GO_Central"/>
</dbReference>
<dbReference type="GO" id="GO:0001659">
    <property type="term" value="P:temperature homeostasis"/>
    <property type="evidence" value="ECO:0000318"/>
    <property type="project" value="GO_Central"/>
</dbReference>
<dbReference type="InterPro" id="IPR001704">
    <property type="entry name" value="Orexin"/>
</dbReference>
<dbReference type="PANTHER" id="PTHR15173:SF2">
    <property type="entry name" value="HYPOCRETIN NEUROPEPTIDE PRECURSOR"/>
    <property type="match status" value="1"/>
</dbReference>
<dbReference type="PANTHER" id="PTHR15173">
    <property type="entry name" value="OREXIN"/>
    <property type="match status" value="1"/>
</dbReference>
<dbReference type="Pfam" id="PF02072">
    <property type="entry name" value="Orexin"/>
    <property type="match status" value="1"/>
</dbReference>
<dbReference type="PIRSF" id="PIRSF037824">
    <property type="entry name" value="Orexin"/>
    <property type="match status" value="1"/>
</dbReference>
<dbReference type="PRINTS" id="PR01091">
    <property type="entry name" value="OREXINPP"/>
</dbReference>